<evidence type="ECO:0000255" key="1">
    <source>
        <dbReference type="HAMAP-Rule" id="MF_01496"/>
    </source>
</evidence>
<keyword id="KW-0007">Acetylation</keyword>
<keyword id="KW-0148">Chlorophyll</keyword>
<keyword id="KW-0150">Chloroplast</keyword>
<keyword id="KW-0157">Chromophore</keyword>
<keyword id="KW-0464">Manganese</keyword>
<keyword id="KW-0472">Membrane</keyword>
<keyword id="KW-0479">Metal-binding</keyword>
<keyword id="KW-0597">Phosphoprotein</keyword>
<keyword id="KW-0602">Photosynthesis</keyword>
<keyword id="KW-0604">Photosystem II</keyword>
<keyword id="KW-0934">Plastid</keyword>
<keyword id="KW-0793">Thylakoid</keyword>
<keyword id="KW-0812">Transmembrane</keyword>
<keyword id="KW-1133">Transmembrane helix</keyword>
<gene>
    <name evidence="1" type="primary">psbC</name>
</gene>
<protein>
    <recommendedName>
        <fullName evidence="1">Photosystem II CP43 reaction center protein</fullName>
    </recommendedName>
    <alternativeName>
        <fullName evidence="1">PSII 43 kDa protein</fullName>
    </alternativeName>
    <alternativeName>
        <fullName evidence="1">Protein CP-43</fullName>
    </alternativeName>
</protein>
<sequence>METLYNGTLSLGGKDQESTGFAWWSGNARLINLSGRLLGAHVAHAGLIVFWAGAMNLFEVAHFVPEKPMYEQGLILLPHLASLGYGVGPGGEVIDTFPYFVSGVLHLISSAVLGFGGVYHSLIGPETLEETFPFFGYTWKDKNKMTSILGFHLIILGFGAWLLVWKAMYFGGVYDTWAPGGGDTRIITNPTTNPAVIFGYLLKSPFGGDGWIVSVDNMEDIIGGHIWIGTLEIFGGIWHIFTQPWAWTRRAFVWSGEAYLSYSLGAIALMGFVACCMGWFNNTAYPSEFYGPTGPEASQSQAFTFLVRDQRLGANVASAQGPTGLGKYLMRSPTGEIIFGGETMRFWDFRGPWLEPLRGPNGLDLNKLKNDIQPWQERRAAEYMTHAPLGSLNSVGGVATEINSVNFVSPRSWLATSHFCLGFFFFVGHLWHAGRARAAAAGFEKGIDRLTEPVLSLKPLD</sequence>
<feature type="propeptide" id="PRO_0000431213" evidence="1">
    <location>
        <begin position="1"/>
        <end position="2"/>
    </location>
</feature>
<feature type="chain" id="PRO_0000361502" description="Photosystem II CP43 reaction center protein" evidence="1">
    <location>
        <begin position="3"/>
        <end position="461"/>
    </location>
</feature>
<feature type="transmembrane region" description="Helical" evidence="1">
    <location>
        <begin position="57"/>
        <end position="81"/>
    </location>
</feature>
<feature type="transmembrane region" description="Helical" evidence="1">
    <location>
        <begin position="122"/>
        <end position="143"/>
    </location>
</feature>
<feature type="transmembrane region" description="Helical" evidence="1">
    <location>
        <begin position="166"/>
        <end position="188"/>
    </location>
</feature>
<feature type="transmembrane region" description="Helical" evidence="1">
    <location>
        <begin position="243"/>
        <end position="263"/>
    </location>
</feature>
<feature type="transmembrane region" description="Helical" evidence="1">
    <location>
        <begin position="279"/>
        <end position="300"/>
    </location>
</feature>
<feature type="transmembrane region" description="Helical" evidence="1">
    <location>
        <begin position="435"/>
        <end position="459"/>
    </location>
</feature>
<feature type="binding site" evidence="1">
    <location>
        <position position="355"/>
    </location>
    <ligand>
        <name>[CaMn4O5] cluster</name>
        <dbReference type="ChEBI" id="CHEBI:189552"/>
    </ligand>
</feature>
<feature type="modified residue" description="N-acetylthreonine" evidence="1">
    <location>
        <position position="3"/>
    </location>
</feature>
<feature type="modified residue" description="Phosphothreonine" evidence="1">
    <location>
        <position position="3"/>
    </location>
</feature>
<comment type="function">
    <text evidence="1">One of the components of the core complex of photosystem II (PSII). It binds chlorophyll and helps catalyze the primary light-induced photochemical processes of PSII. PSII is a light-driven water:plastoquinone oxidoreductase, using light energy to abstract electrons from H(2)O, generating O(2) and a proton gradient subsequently used for ATP formation.</text>
</comment>
<comment type="cofactor">
    <text evidence="1">Binds multiple chlorophylls and provides some of the ligands for the Ca-4Mn-5O cluster of the oxygen-evolving complex. It may also provide a ligand for a Cl- that is required for oxygen evolution. PSII binds additional chlorophylls, carotenoids and specific lipids.</text>
</comment>
<comment type="subunit">
    <text evidence="1">PSII is composed of 1 copy each of membrane proteins PsbA, PsbB, PsbC, PsbD, PsbE, PsbF, PsbH, PsbI, PsbJ, PsbK, PsbL, PsbM, PsbT, PsbX, PsbY, PsbZ, Psb30/Ycf12, at least 3 peripheral proteins of the oxygen-evolving complex and a large number of cofactors. It forms dimeric complexes.</text>
</comment>
<comment type="subcellular location">
    <subcellularLocation>
        <location evidence="1">Plastid</location>
        <location evidence="1">Chloroplast thylakoid membrane</location>
        <topology evidence="1">Multi-pass membrane protein</topology>
    </subcellularLocation>
</comment>
<comment type="similarity">
    <text evidence="1">Belongs to the PsbB/PsbC family. PsbC subfamily.</text>
</comment>
<name>PSBC_STIHE</name>
<dbReference type="EMBL" id="DQ630521">
    <property type="protein sequence ID" value="ABF60168.1"/>
    <property type="molecule type" value="Genomic_DNA"/>
</dbReference>
<dbReference type="RefSeq" id="YP_764370.1">
    <property type="nucleotide sequence ID" value="NC_008372.1"/>
</dbReference>
<dbReference type="SMR" id="Q06SJ6"/>
<dbReference type="GeneID" id="4308411"/>
<dbReference type="GO" id="GO:0009535">
    <property type="term" value="C:chloroplast thylakoid membrane"/>
    <property type="evidence" value="ECO:0007669"/>
    <property type="project" value="UniProtKB-SubCell"/>
</dbReference>
<dbReference type="GO" id="GO:0009523">
    <property type="term" value="C:photosystem II"/>
    <property type="evidence" value="ECO:0007669"/>
    <property type="project" value="UniProtKB-KW"/>
</dbReference>
<dbReference type="GO" id="GO:0016168">
    <property type="term" value="F:chlorophyll binding"/>
    <property type="evidence" value="ECO:0007669"/>
    <property type="project" value="UniProtKB-UniRule"/>
</dbReference>
<dbReference type="GO" id="GO:0045156">
    <property type="term" value="F:electron transporter, transferring electrons within the cyclic electron transport pathway of photosynthesis activity"/>
    <property type="evidence" value="ECO:0007669"/>
    <property type="project" value="InterPro"/>
</dbReference>
<dbReference type="GO" id="GO:0046872">
    <property type="term" value="F:metal ion binding"/>
    <property type="evidence" value="ECO:0007669"/>
    <property type="project" value="UniProtKB-KW"/>
</dbReference>
<dbReference type="GO" id="GO:0009772">
    <property type="term" value="P:photosynthetic electron transport in photosystem II"/>
    <property type="evidence" value="ECO:0007669"/>
    <property type="project" value="InterPro"/>
</dbReference>
<dbReference type="FunFam" id="1.10.10.670:FF:000001">
    <property type="entry name" value="Photosystem II CP43 reaction center protein"/>
    <property type="match status" value="1"/>
</dbReference>
<dbReference type="Gene3D" id="1.10.10.670">
    <property type="entry name" value="photosystem ii from thermosynechococcus elongatus"/>
    <property type="match status" value="1"/>
</dbReference>
<dbReference type="HAMAP" id="MF_01496">
    <property type="entry name" value="PSII_PsbC_CP43"/>
    <property type="match status" value="1"/>
</dbReference>
<dbReference type="InterPro" id="IPR000932">
    <property type="entry name" value="PS_antenna-like"/>
</dbReference>
<dbReference type="InterPro" id="IPR036001">
    <property type="entry name" value="PS_II_antenna-like_sf"/>
</dbReference>
<dbReference type="InterPro" id="IPR005869">
    <property type="entry name" value="PSII_PsbC"/>
</dbReference>
<dbReference type="InterPro" id="IPR044900">
    <property type="entry name" value="PSII_PsbC_sf"/>
</dbReference>
<dbReference type="NCBIfam" id="TIGR01153">
    <property type="entry name" value="psbC"/>
    <property type="match status" value="1"/>
</dbReference>
<dbReference type="Pfam" id="PF00421">
    <property type="entry name" value="PSII"/>
    <property type="match status" value="1"/>
</dbReference>
<dbReference type="SUPFAM" id="SSF161077">
    <property type="entry name" value="Photosystem II antenna protein-like"/>
    <property type="match status" value="1"/>
</dbReference>
<reference key="1">
    <citation type="journal article" date="2006" name="Mol. Genet. Genomics">
        <title>Distinctive architecture of the chloroplast genome in the chlorophycean green alga Stigeoclonium helveticum.</title>
        <authorList>
            <person name="Belanger A.-S."/>
            <person name="Brouard J.-S."/>
            <person name="Charlebois P."/>
            <person name="Otis C."/>
            <person name="Lemieux C."/>
            <person name="Turmel M."/>
        </authorList>
    </citation>
    <scope>NUCLEOTIDE SEQUENCE [LARGE SCALE GENOMIC DNA]</scope>
    <source>
        <strain>UTEX 441</strain>
    </source>
</reference>
<geneLocation type="chloroplast"/>
<accession>Q06SJ6</accession>
<proteinExistence type="inferred from homology"/>
<organism>
    <name type="scientific">Stigeoclonium helveticum</name>
    <name type="common">Green alga</name>
    <dbReference type="NCBI Taxonomy" id="55999"/>
    <lineage>
        <taxon>Eukaryota</taxon>
        <taxon>Viridiplantae</taxon>
        <taxon>Chlorophyta</taxon>
        <taxon>core chlorophytes</taxon>
        <taxon>Chlorophyceae</taxon>
        <taxon>OCC clade</taxon>
        <taxon>Chaetophorales</taxon>
        <taxon>Chaetophoraceae</taxon>
        <taxon>Stigeoclonium</taxon>
    </lineage>
</organism>